<proteinExistence type="inferred from homology"/>
<protein>
    <recommendedName>
        <fullName>Paired box protein Pax-9</fullName>
    </recommendedName>
</protein>
<feature type="chain" id="PRO_0000050200" description="Paired box protein Pax-9">
    <location>
        <begin position="1"/>
        <end position="341"/>
    </location>
</feature>
<feature type="DNA-binding region" description="Paired" evidence="2">
    <location>
        <begin position="4"/>
        <end position="130"/>
    </location>
</feature>
<feature type="region of interest" description="PAI subdomain" evidence="2">
    <location>
        <begin position="7"/>
        <end position="63"/>
    </location>
</feature>
<feature type="region of interest" description="RED subdomain" evidence="2">
    <location>
        <begin position="82"/>
        <end position="130"/>
    </location>
</feature>
<feature type="region of interest" description="Interaction with KDM5B" evidence="1">
    <location>
        <begin position="168"/>
        <end position="189"/>
    </location>
</feature>
<evidence type="ECO:0000250" key="1"/>
<evidence type="ECO:0000255" key="2">
    <source>
        <dbReference type="PROSITE-ProRule" id="PRU00381"/>
    </source>
</evidence>
<organism>
    <name type="scientific">Callimico goeldii</name>
    <name type="common">Goeldi's marmoset</name>
    <dbReference type="NCBI Taxonomy" id="9495"/>
    <lineage>
        <taxon>Eukaryota</taxon>
        <taxon>Metazoa</taxon>
        <taxon>Chordata</taxon>
        <taxon>Craniata</taxon>
        <taxon>Vertebrata</taxon>
        <taxon>Euteleostomi</taxon>
        <taxon>Mammalia</taxon>
        <taxon>Eutheria</taxon>
        <taxon>Euarchontoglires</taxon>
        <taxon>Primates</taxon>
        <taxon>Haplorrhini</taxon>
        <taxon>Platyrrhini</taxon>
        <taxon>Cebidae</taxon>
        <taxon>Callitrichinae</taxon>
        <taxon>Callimico</taxon>
    </lineage>
</organism>
<dbReference type="EMBL" id="DQ067516">
    <property type="protein sequence ID" value="AAZ39857.1"/>
    <property type="molecule type" value="Genomic_DNA"/>
</dbReference>
<dbReference type="EMBL" id="DQ067514">
    <property type="protein sequence ID" value="AAZ39857.1"/>
    <property type="status" value="JOINED"/>
    <property type="molecule type" value="Genomic_DNA"/>
</dbReference>
<dbReference type="EMBL" id="DQ067515">
    <property type="protein sequence ID" value="AAZ39857.1"/>
    <property type="status" value="JOINED"/>
    <property type="molecule type" value="Genomic_DNA"/>
</dbReference>
<dbReference type="SMR" id="Q2VL59"/>
<dbReference type="GO" id="GO:0005634">
    <property type="term" value="C:nucleus"/>
    <property type="evidence" value="ECO:0007669"/>
    <property type="project" value="UniProtKB-SubCell"/>
</dbReference>
<dbReference type="GO" id="GO:0000981">
    <property type="term" value="F:DNA-binding transcription factor activity, RNA polymerase II-specific"/>
    <property type="evidence" value="ECO:0007669"/>
    <property type="project" value="TreeGrafter"/>
</dbReference>
<dbReference type="GO" id="GO:0000978">
    <property type="term" value="F:RNA polymerase II cis-regulatory region sequence-specific DNA binding"/>
    <property type="evidence" value="ECO:0007669"/>
    <property type="project" value="TreeGrafter"/>
</dbReference>
<dbReference type="CDD" id="cd00131">
    <property type="entry name" value="PAX"/>
    <property type="match status" value="1"/>
</dbReference>
<dbReference type="FunFam" id="1.10.10.10:FF:000003">
    <property type="entry name" value="Paired box protein Pax-6"/>
    <property type="match status" value="1"/>
</dbReference>
<dbReference type="FunFam" id="1.10.10.10:FF:000084">
    <property type="entry name" value="paired box protein Pax-9"/>
    <property type="match status" value="1"/>
</dbReference>
<dbReference type="Gene3D" id="1.10.10.10">
    <property type="entry name" value="Winged helix-like DNA-binding domain superfamily/Winged helix DNA-binding domain"/>
    <property type="match status" value="2"/>
</dbReference>
<dbReference type="InterPro" id="IPR009057">
    <property type="entry name" value="Homeodomain-like_sf"/>
</dbReference>
<dbReference type="InterPro" id="IPR043182">
    <property type="entry name" value="PAIRED_DNA-bd_dom"/>
</dbReference>
<dbReference type="InterPro" id="IPR001523">
    <property type="entry name" value="Paired_dom"/>
</dbReference>
<dbReference type="InterPro" id="IPR043565">
    <property type="entry name" value="PAX_fam"/>
</dbReference>
<dbReference type="InterPro" id="IPR036388">
    <property type="entry name" value="WH-like_DNA-bd_sf"/>
</dbReference>
<dbReference type="PANTHER" id="PTHR45636">
    <property type="entry name" value="PAIRED BOX PROTEIN PAX-6-RELATED-RELATED"/>
    <property type="match status" value="1"/>
</dbReference>
<dbReference type="PANTHER" id="PTHR45636:SF13">
    <property type="entry name" value="PAIRED BOX PROTEIN PAX-9"/>
    <property type="match status" value="1"/>
</dbReference>
<dbReference type="Pfam" id="PF00292">
    <property type="entry name" value="PAX"/>
    <property type="match status" value="1"/>
</dbReference>
<dbReference type="PRINTS" id="PR00027">
    <property type="entry name" value="PAIREDBOX"/>
</dbReference>
<dbReference type="SMART" id="SM00351">
    <property type="entry name" value="PAX"/>
    <property type="match status" value="1"/>
</dbReference>
<dbReference type="SUPFAM" id="SSF46689">
    <property type="entry name" value="Homeodomain-like"/>
    <property type="match status" value="1"/>
</dbReference>
<dbReference type="PROSITE" id="PS00034">
    <property type="entry name" value="PAIRED_1"/>
    <property type="match status" value="1"/>
</dbReference>
<dbReference type="PROSITE" id="PS51057">
    <property type="entry name" value="PAIRED_2"/>
    <property type="match status" value="1"/>
</dbReference>
<accession>Q2VL59</accession>
<gene>
    <name type="primary">PAX9</name>
</gene>
<keyword id="KW-0217">Developmental protein</keyword>
<keyword id="KW-0238">DNA-binding</keyword>
<keyword id="KW-0539">Nucleus</keyword>
<keyword id="KW-0563">Paired box</keyword>
<keyword id="KW-0804">Transcription</keyword>
<keyword id="KW-0805">Transcription regulation</keyword>
<sequence>MEPAFGEVNQLGGVFVNGRPLPNAIRLRIVELAQLGIRPCDISRQLRVSHGCVSKILARYNETGSILPGAIGGSKPRVTTPTVVKHIRTYKQRDPGIFAWEIRDRLLADGVCDKYNVPSVSSISRILRNKIGNLAQQGHYDSYKQHQPAPQPALPYNHIYSYPNPITAAAAKVPTPPGVPAIPGSVAMPRTWPSSHSVTDILGIRSITDQVSDSSPYHSPKVEEWSSLGRNNFPAAAPHAVNGLEKGTLEQETKYSQAPNGLPAVGSFVSASSMAPYPTPAQVSPYMTYSAAPSGYVAGHGWQHAGSTPLSPHNCDIPASLAFKGMQAVREGSHSVTASAL</sequence>
<comment type="function">
    <text evidence="1">Transcription factor required for normal development of thymus, parathyroid glands, ultimobranchial bodies, teeth, skeletal elements of skull and larynx as well as distal limbs.</text>
</comment>
<comment type="subunit">
    <text evidence="1">Interacts with KDM5B.</text>
</comment>
<comment type="subcellular location">
    <subcellularLocation>
        <location>Nucleus</location>
    </subcellularLocation>
</comment>
<name>PAX9_CALGO</name>
<reference key="1">
    <citation type="journal article" date="2006" name="Mol. Biol. Evol.">
        <title>Molecular evolution of the primate developmental genes MSX1 and PAX9.</title>
        <authorList>
            <person name="Perry G.H."/>
            <person name="Verrelli B.C."/>
            <person name="Stone A.C."/>
        </authorList>
    </citation>
    <scope>NUCLEOTIDE SEQUENCE [GENOMIC DNA]</scope>
    <source>
        <strain>Isolate PR00295</strain>
    </source>
</reference>